<proteinExistence type="evidence at protein level"/>
<sequence length="191" mass="19899">MPPEPLSLPLDLAPGLVDGDTFLSIMGALPTGVTVVTTLGPDGEPYGLTCSAACSVSKAPPLLLVCINRDSRVLKALLERGEFAVNVLRGGGESTSARFAAPVDDRFRDVRWEPGSAGGVPVMSADVVAHAECRVAAALDAGDHTIVIGAVVAGGPRPEVPSPLMYWRRSYARWPVEEDPRTAALTLAAEG</sequence>
<reference key="1">
    <citation type="journal article" date="2013" name="Metab. Eng.">
        <title>Deciphering and engineering of the final step halogenase for improved chlortetracycline biosynthesis in industrial Streptomyces aureofaciens.</title>
        <authorList>
            <person name="Zhu T."/>
            <person name="Cheng X."/>
            <person name="Liu Y."/>
            <person name="Deng Z."/>
            <person name="You D."/>
        </authorList>
    </citation>
    <scope>NUCLEOTIDE SEQUENCE [GENOMIC DNA]</scope>
    <scope>FUNCTION</scope>
    <scope>CATALYTIC ACTIVITY</scope>
    <source>
        <strain evidence="6">F3</strain>
    </source>
</reference>
<reference key="2">
    <citation type="submission" date="2016-08" db="EMBL/GenBank/DDBJ databases">
        <title>Sequencing, assembly and comparative genomics of S. aureofaciens ATCC 10762.</title>
        <authorList>
            <person name="Gradnigo J.S."/>
            <person name="Johnson N."/>
            <person name="Somerville G.A."/>
        </authorList>
    </citation>
    <scope>NUCLEOTIDE SEQUENCE [LARGE SCALE GENOMIC DNA]</scope>
    <source>
        <strain>ATCC 10762 / DSM 40127 / CCM 3239 / JCM 4008 / LMG 5968 / NBRC 12843 / NCIMB 8234 / A-377</strain>
    </source>
</reference>
<reference key="3">
    <citation type="submission" date="2017-04" db="EMBL/GenBank/DDBJ databases">
        <title>TAR cloning and integrated overexpression of 6-demethylchlortetracycline biosynthetic gene cluster in Streptomyces aureofaciens.</title>
        <authorList>
            <person name="Hu H."/>
            <person name="Huang H."/>
            <person name="Min T."/>
        </authorList>
    </citation>
    <scope>NUCLEOTIDE SEQUENCE [LARGE SCALE GENOMIC DNA]</scope>
    <source>
        <strain evidence="7">DM-1</strain>
    </source>
</reference>
<accession>S4S3E3</accession>
<gene>
    <name evidence="3" type="primary">ctcQ</name>
    <name evidence="7" type="ORF">B6264_18520</name>
    <name evidence="8" type="ORF">HS99_0013300</name>
</gene>
<keyword id="KW-0002">3D-structure</keyword>
<keyword id="KW-0274">FAD</keyword>
<keyword id="KW-0285">Flavoprotein</keyword>
<keyword id="KW-0520">NAD</keyword>
<keyword id="KW-0560">Oxidoreductase</keyword>
<keyword id="KW-1185">Reference proteome</keyword>
<protein>
    <recommendedName>
        <fullName evidence="3">Flavin reductase (NADH)</fullName>
        <ecNumber evidence="5">1.5.1.36</ecNumber>
    </recommendedName>
</protein>
<name>CTCQ_KITAU</name>
<evidence type="ECO:0000250" key="1">
    <source>
        <dbReference type="UniProtKB" id="Q5SJP7"/>
    </source>
</evidence>
<evidence type="ECO:0000269" key="2">
    <source>
    </source>
</evidence>
<evidence type="ECO:0000303" key="3">
    <source>
    </source>
</evidence>
<evidence type="ECO:0000305" key="4"/>
<evidence type="ECO:0000305" key="5">
    <source>
    </source>
</evidence>
<evidence type="ECO:0000312" key="6">
    <source>
        <dbReference type="EMBL" id="AEI98660.1"/>
    </source>
</evidence>
<evidence type="ECO:0000312" key="7">
    <source>
        <dbReference type="EMBL" id="ARF80632.1"/>
    </source>
</evidence>
<evidence type="ECO:0000312" key="8">
    <source>
        <dbReference type="EMBL" id="OEV33528.1"/>
    </source>
</evidence>
<evidence type="ECO:0007829" key="9">
    <source>
        <dbReference type="PDB" id="8CT0"/>
    </source>
</evidence>
<feature type="chain" id="PRO_0000443995" description="Flavin reductase (NADH)">
    <location>
        <begin position="1"/>
        <end position="191"/>
    </location>
</feature>
<feature type="binding site" evidence="1">
    <location>
        <begin position="46"/>
        <end position="52"/>
    </location>
    <ligand>
        <name>FAD</name>
        <dbReference type="ChEBI" id="CHEBI:57692"/>
    </ligand>
</feature>
<feature type="binding site" evidence="1">
    <location>
        <position position="55"/>
    </location>
    <ligand>
        <name>NAD(+)</name>
        <dbReference type="ChEBI" id="CHEBI:57540"/>
    </ligand>
</feature>
<feature type="binding site" evidence="1">
    <location>
        <begin position="72"/>
        <end position="73"/>
    </location>
    <ligand>
        <name>FAD</name>
        <dbReference type="ChEBI" id="CHEBI:57692"/>
    </ligand>
</feature>
<feature type="binding site" evidence="1">
    <location>
        <position position="144"/>
    </location>
    <ligand>
        <name>NAD(+)</name>
        <dbReference type="ChEBI" id="CHEBI:57540"/>
    </ligand>
</feature>
<feature type="binding site" evidence="1">
    <location>
        <begin position="166"/>
        <end position="169"/>
    </location>
    <ligand>
        <name>NAD(+)</name>
        <dbReference type="ChEBI" id="CHEBI:57540"/>
    </ligand>
</feature>
<feature type="helix" evidence="9">
    <location>
        <begin position="19"/>
        <end position="26"/>
    </location>
</feature>
<feature type="strand" evidence="9">
    <location>
        <begin position="34"/>
        <end position="39"/>
    </location>
</feature>
<feature type="strand" evidence="9">
    <location>
        <begin position="45"/>
        <end position="50"/>
    </location>
</feature>
<feature type="strand" evidence="9">
    <location>
        <begin position="53"/>
        <end position="57"/>
    </location>
</feature>
<feature type="turn" evidence="9">
    <location>
        <begin position="58"/>
        <end position="61"/>
    </location>
</feature>
<feature type="strand" evidence="9">
    <location>
        <begin position="62"/>
        <end position="68"/>
    </location>
</feature>
<feature type="helix" evidence="9">
    <location>
        <begin position="72"/>
        <end position="80"/>
    </location>
</feature>
<feature type="strand" evidence="9">
    <location>
        <begin position="82"/>
        <end position="89"/>
    </location>
</feature>
<feature type="helix" evidence="9">
    <location>
        <begin position="90"/>
        <end position="92"/>
    </location>
</feature>
<feature type="helix" evidence="9">
    <location>
        <begin position="93"/>
        <end position="100"/>
    </location>
</feature>
<feature type="turn" evidence="9">
    <location>
        <begin position="106"/>
        <end position="109"/>
    </location>
</feature>
<feature type="strand" evidence="9">
    <location>
        <begin position="112"/>
        <end position="114"/>
    </location>
</feature>
<feature type="turn" evidence="9">
    <location>
        <begin position="116"/>
        <end position="119"/>
    </location>
</feature>
<feature type="strand" evidence="9">
    <location>
        <begin position="121"/>
        <end position="141"/>
    </location>
</feature>
<feature type="strand" evidence="9">
    <location>
        <begin position="144"/>
        <end position="156"/>
    </location>
</feature>
<feature type="strand" evidence="9">
    <location>
        <begin position="165"/>
        <end position="167"/>
    </location>
</feature>
<feature type="strand" evidence="9">
    <location>
        <begin position="170"/>
        <end position="172"/>
    </location>
</feature>
<dbReference type="EC" id="1.5.1.36" evidence="5"/>
<dbReference type="EMBL" id="HM627755">
    <property type="protein sequence ID" value="AEI98660.1"/>
    <property type="molecule type" value="Genomic_DNA"/>
</dbReference>
<dbReference type="EMBL" id="JPRF03000065">
    <property type="protein sequence ID" value="OEV33528.1"/>
    <property type="molecule type" value="Genomic_DNA"/>
</dbReference>
<dbReference type="EMBL" id="CP020567">
    <property type="protein sequence ID" value="ARF80632.1"/>
    <property type="molecule type" value="Genomic_DNA"/>
</dbReference>
<dbReference type="RefSeq" id="WP_030282588.1">
    <property type="nucleotide sequence ID" value="NZ_BMUB01000002.1"/>
</dbReference>
<dbReference type="PDB" id="8CT0">
    <property type="method" value="X-ray"/>
    <property type="resolution" value="2.45 A"/>
    <property type="chains" value="A/B/C/D/E/F/G/H=1-191"/>
</dbReference>
<dbReference type="PDBsum" id="8CT0"/>
<dbReference type="SMR" id="S4S3E3"/>
<dbReference type="GeneID" id="97484083"/>
<dbReference type="KEGG" id="ag:AEI98660"/>
<dbReference type="KEGG" id="kau:B6264_18520"/>
<dbReference type="OrthoDB" id="9792858at2"/>
<dbReference type="Proteomes" id="UP000037395">
    <property type="component" value="Unassembled WGS sequence"/>
</dbReference>
<dbReference type="GO" id="GO:0036382">
    <property type="term" value="F:flavin reductase (NADH) activity"/>
    <property type="evidence" value="ECO:0007669"/>
    <property type="project" value="UniProtKB-EC"/>
</dbReference>
<dbReference type="GO" id="GO:0010181">
    <property type="term" value="F:FMN binding"/>
    <property type="evidence" value="ECO:0007669"/>
    <property type="project" value="InterPro"/>
</dbReference>
<dbReference type="GO" id="GO:0042602">
    <property type="term" value="F:riboflavin reductase (NADPH) activity"/>
    <property type="evidence" value="ECO:0007669"/>
    <property type="project" value="TreeGrafter"/>
</dbReference>
<dbReference type="Gene3D" id="2.30.110.10">
    <property type="entry name" value="Electron Transport, Fmn-binding Protein, Chain A"/>
    <property type="match status" value="1"/>
</dbReference>
<dbReference type="InterPro" id="IPR002563">
    <property type="entry name" value="Flavin_Rdtase-like_dom"/>
</dbReference>
<dbReference type="InterPro" id="IPR050268">
    <property type="entry name" value="NADH-dep_flavin_reductase"/>
</dbReference>
<dbReference type="InterPro" id="IPR012349">
    <property type="entry name" value="Split_barrel_FMN-bd"/>
</dbReference>
<dbReference type="PANTHER" id="PTHR30466">
    <property type="entry name" value="FLAVIN REDUCTASE"/>
    <property type="match status" value="1"/>
</dbReference>
<dbReference type="PANTHER" id="PTHR30466:SF1">
    <property type="entry name" value="FMN REDUCTASE (NADH) RUTF"/>
    <property type="match status" value="1"/>
</dbReference>
<dbReference type="Pfam" id="PF01613">
    <property type="entry name" value="Flavin_Reduct"/>
    <property type="match status" value="1"/>
</dbReference>
<dbReference type="SMART" id="SM00903">
    <property type="entry name" value="Flavin_Reduct"/>
    <property type="match status" value="1"/>
</dbReference>
<dbReference type="SUPFAM" id="SSF50475">
    <property type="entry name" value="FMN-binding split barrel"/>
    <property type="match status" value="1"/>
</dbReference>
<organism>
    <name type="scientific">Kitasatospora aureofaciens</name>
    <name type="common">Streptomyces aureofaciens</name>
    <dbReference type="NCBI Taxonomy" id="1894"/>
    <lineage>
        <taxon>Bacteria</taxon>
        <taxon>Bacillati</taxon>
        <taxon>Actinomycetota</taxon>
        <taxon>Actinomycetes</taxon>
        <taxon>Kitasatosporales</taxon>
        <taxon>Streptomycetaceae</taxon>
        <taxon>Kitasatospora</taxon>
    </lineage>
</organism>
<comment type="function">
    <text evidence="2">Catalyzes the reduction of flavin by NADH. Subsequently, the reduced flavins is transferred to the tetracycline 7-halogenase CtcP.</text>
</comment>
<comment type="catalytic activity">
    <reaction evidence="5">
        <text>a reduced flavin + NAD(+) = an oxidized flavin + NADH + 2 H(+)</text>
        <dbReference type="Rhea" id="RHEA:31303"/>
        <dbReference type="ChEBI" id="CHEBI:15378"/>
        <dbReference type="ChEBI" id="CHEBI:57540"/>
        <dbReference type="ChEBI" id="CHEBI:57945"/>
        <dbReference type="ChEBI" id="CHEBI:60531"/>
        <dbReference type="ChEBI" id="CHEBI:62787"/>
        <dbReference type="EC" id="1.5.1.36"/>
    </reaction>
</comment>
<comment type="similarity">
    <text evidence="4">Belongs to the non-flavoprotein flavin reductase family.</text>
</comment>